<name>SFGH2_SHIBS</name>
<organism>
    <name type="scientific">Shigella boydii serotype 4 (strain Sb227)</name>
    <dbReference type="NCBI Taxonomy" id="300268"/>
    <lineage>
        <taxon>Bacteria</taxon>
        <taxon>Pseudomonadati</taxon>
        <taxon>Pseudomonadota</taxon>
        <taxon>Gammaproteobacteria</taxon>
        <taxon>Enterobacterales</taxon>
        <taxon>Enterobacteriaceae</taxon>
        <taxon>Shigella</taxon>
    </lineage>
</organism>
<sequence length="278" mass="31259">MEMLEEHRCFEGWQQRWRHDSSTLNCPMTFSIFLPPPRDHTPPPVLYWLSGLTCNDENFTTKAGAQRVAAELGIVLVMPDTSPRGEKVANDDGYDLGQGAGFYLNATQPPWATHYRMYDYLRDELPALVQSQFNVSDRCAISGHSMGGHGALIMALKNPGKYTSVSAFAPIVNPCSVPWGIKAFSSYLGEDKNAWLEWDSCALMYASNAQDAIPTLIDQGDNDQFLADQLQPAVLAEAARQKAWPMTLRIQPGYDHSYYFIASFIEDHLRFHAQYLLK</sequence>
<reference key="1">
    <citation type="journal article" date="2005" name="Nucleic Acids Res.">
        <title>Genome dynamics and diversity of Shigella species, the etiologic agents of bacillary dysentery.</title>
        <authorList>
            <person name="Yang F."/>
            <person name="Yang J."/>
            <person name="Zhang X."/>
            <person name="Chen L."/>
            <person name="Jiang Y."/>
            <person name="Yan Y."/>
            <person name="Tang X."/>
            <person name="Wang J."/>
            <person name="Xiong Z."/>
            <person name="Dong J."/>
            <person name="Xue Y."/>
            <person name="Zhu Y."/>
            <person name="Xu X."/>
            <person name="Sun L."/>
            <person name="Chen S."/>
            <person name="Nie H."/>
            <person name="Peng J."/>
            <person name="Xu J."/>
            <person name="Wang Y."/>
            <person name="Yuan Z."/>
            <person name="Wen Y."/>
            <person name="Yao Z."/>
            <person name="Shen Y."/>
            <person name="Qiang B."/>
            <person name="Hou Y."/>
            <person name="Yu J."/>
            <person name="Jin Q."/>
        </authorList>
    </citation>
    <scope>NUCLEOTIDE SEQUENCE [LARGE SCALE GENOMIC DNA]</scope>
    <source>
        <strain>Sb227</strain>
    </source>
</reference>
<keyword id="KW-0378">Hydrolase</keyword>
<keyword id="KW-0719">Serine esterase</keyword>
<dbReference type="EC" id="3.1.2.12"/>
<dbReference type="EMBL" id="CP000036">
    <property type="protein sequence ID" value="ABB66746.1"/>
    <property type="molecule type" value="Genomic_DNA"/>
</dbReference>
<dbReference type="RefSeq" id="WP_000425438.1">
    <property type="nucleotide sequence ID" value="NC_007613.1"/>
</dbReference>
<dbReference type="SMR" id="Q31YW2"/>
<dbReference type="ESTHER" id="shiss-yeiG">
    <property type="family name" value="A85-EsteraseD-FGH"/>
</dbReference>
<dbReference type="KEGG" id="sbo:SBO_2173"/>
<dbReference type="HOGENOM" id="CLU_056472_0_0_6"/>
<dbReference type="Proteomes" id="UP000007067">
    <property type="component" value="Chromosome"/>
</dbReference>
<dbReference type="GO" id="GO:0005829">
    <property type="term" value="C:cytosol"/>
    <property type="evidence" value="ECO:0007669"/>
    <property type="project" value="TreeGrafter"/>
</dbReference>
<dbReference type="GO" id="GO:0052689">
    <property type="term" value="F:carboxylic ester hydrolase activity"/>
    <property type="evidence" value="ECO:0007669"/>
    <property type="project" value="UniProtKB-KW"/>
</dbReference>
<dbReference type="GO" id="GO:0018738">
    <property type="term" value="F:S-formylglutathione hydrolase activity"/>
    <property type="evidence" value="ECO:0007669"/>
    <property type="project" value="UniProtKB-EC"/>
</dbReference>
<dbReference type="GO" id="GO:0046294">
    <property type="term" value="P:formaldehyde catabolic process"/>
    <property type="evidence" value="ECO:0007669"/>
    <property type="project" value="InterPro"/>
</dbReference>
<dbReference type="FunFam" id="3.40.50.1820:FF:000002">
    <property type="entry name" value="S-formylglutathione hydrolase"/>
    <property type="match status" value="1"/>
</dbReference>
<dbReference type="Gene3D" id="3.40.50.1820">
    <property type="entry name" value="alpha/beta hydrolase"/>
    <property type="match status" value="1"/>
</dbReference>
<dbReference type="InterPro" id="IPR029058">
    <property type="entry name" value="AB_hydrolase_fold"/>
</dbReference>
<dbReference type="InterPro" id="IPR000801">
    <property type="entry name" value="Esterase-like"/>
</dbReference>
<dbReference type="InterPro" id="IPR014186">
    <property type="entry name" value="S-formylglutathione_hydrol"/>
</dbReference>
<dbReference type="NCBIfam" id="TIGR02821">
    <property type="entry name" value="fghA_ester_D"/>
    <property type="match status" value="1"/>
</dbReference>
<dbReference type="PANTHER" id="PTHR10061">
    <property type="entry name" value="S-FORMYLGLUTATHIONE HYDROLASE"/>
    <property type="match status" value="1"/>
</dbReference>
<dbReference type="PANTHER" id="PTHR10061:SF1">
    <property type="entry name" value="S-FORMYLGLUTATHIONE HYDROLASE YEIG"/>
    <property type="match status" value="1"/>
</dbReference>
<dbReference type="Pfam" id="PF00756">
    <property type="entry name" value="Esterase"/>
    <property type="match status" value="1"/>
</dbReference>
<dbReference type="SUPFAM" id="SSF53474">
    <property type="entry name" value="alpha/beta-Hydrolases"/>
    <property type="match status" value="1"/>
</dbReference>
<comment type="function">
    <text evidence="1">Serine hydrolase involved in the detoxification of formaldehyde. Hydrolyzes S-formylglutathione to glutathione and formate (By similarity).</text>
</comment>
<comment type="catalytic activity">
    <reaction>
        <text>S-formylglutathione + H2O = formate + glutathione + H(+)</text>
        <dbReference type="Rhea" id="RHEA:14961"/>
        <dbReference type="ChEBI" id="CHEBI:15377"/>
        <dbReference type="ChEBI" id="CHEBI:15378"/>
        <dbReference type="ChEBI" id="CHEBI:15740"/>
        <dbReference type="ChEBI" id="CHEBI:57688"/>
        <dbReference type="ChEBI" id="CHEBI:57925"/>
        <dbReference type="EC" id="3.1.2.12"/>
    </reaction>
</comment>
<comment type="similarity">
    <text evidence="2">Belongs to the esterase D family.</text>
</comment>
<gene>
    <name type="primary">yeiG</name>
    <name type="ordered locus">SBO_2173</name>
</gene>
<evidence type="ECO:0000250" key="1"/>
<evidence type="ECO:0000305" key="2"/>
<feature type="chain" id="PRO_0000341675" description="S-formylglutathione hydrolase YeiG">
    <location>
        <begin position="1"/>
        <end position="278"/>
    </location>
</feature>
<feature type="active site" description="Charge relay system" evidence="1">
    <location>
        <position position="145"/>
    </location>
</feature>
<feature type="active site" description="Charge relay system" evidence="1">
    <location>
        <position position="223"/>
    </location>
</feature>
<feature type="active site" description="Charge relay system" evidence="1">
    <location>
        <position position="256"/>
    </location>
</feature>
<proteinExistence type="inferred from homology"/>
<protein>
    <recommendedName>
        <fullName>S-formylglutathione hydrolase YeiG</fullName>
        <shortName>FGH</shortName>
        <ecNumber>3.1.2.12</ecNumber>
    </recommendedName>
</protein>
<accession>Q31YW2</accession>